<name>GT315_ABVP</name>
<sequence length="315" mass="36401">MTMITFLTTTQNGSYDRLATRQAVFLKQNLNVDSQIIRMAQTQLVPVKGSHVIIYTTFNIYPVLINKYRQQLEGKKCVALLDSALMTIPYRNPVFKDPICTVYTTSRFNQENFATLGVSIPYIPHFIPDPNPEGKLKSLSERQYDFITVGINEMDFDRKGHFWNFLVQRWGFKAISVCKFYCFGDHKQDLPDEELWSLYANTKWYLGTSHAETPHLPLLEAYAFGTPAVYISAHEFRYIGFGIPISPAYINVKGTKNFYFAEINTESFIQAVGKAMRMSEGDYNSLSKQARRFFENNYSLNNRVDEFRALFDDSM</sequence>
<organismHost>
    <name type="scientific">Acidianus convivator</name>
    <dbReference type="NCBI Taxonomy" id="269667"/>
</organismHost>
<keyword id="KW-0328">Glycosyltransferase</keyword>
<keyword id="KW-1185">Reference proteome</keyword>
<keyword id="KW-0808">Transferase</keyword>
<gene>
    <name type="ORF">ORF315</name>
</gene>
<reference key="1">
    <citation type="journal article" date="2007" name="Virology">
        <title>Genome of the Acidianus bottle-shaped virus and insights into the replication and packaging mechanisms.</title>
        <authorList>
            <person name="Peng X."/>
            <person name="Basta T."/>
            <person name="Haring M."/>
            <person name="Garrett R.A."/>
            <person name="Prangishvili D."/>
        </authorList>
    </citation>
    <scope>NUCLEOTIDE SEQUENCE [GENOMIC DNA]</scope>
</reference>
<dbReference type="EC" id="2.4.-.-"/>
<dbReference type="EMBL" id="EF432053">
    <property type="protein sequence ID" value="ABP73409.1"/>
    <property type="molecule type" value="Genomic_DNA"/>
</dbReference>
<dbReference type="RefSeq" id="YP_001210323.1">
    <property type="nucleotide sequence ID" value="NC_009452.1"/>
</dbReference>
<dbReference type="SMR" id="A4ZUA5"/>
<dbReference type="CAZy" id="GT4">
    <property type="family name" value="Glycosyltransferase Family 4"/>
</dbReference>
<dbReference type="GeneID" id="5129817"/>
<dbReference type="KEGG" id="vg:5129817"/>
<dbReference type="Proteomes" id="UP000000513">
    <property type="component" value="Segment"/>
</dbReference>
<dbReference type="GO" id="GO:0016757">
    <property type="term" value="F:glycosyltransferase activity"/>
    <property type="evidence" value="ECO:0007669"/>
    <property type="project" value="UniProtKB-KW"/>
</dbReference>
<dbReference type="Gene3D" id="3.40.50.2000">
    <property type="entry name" value="Glycogen Phosphorylase B"/>
    <property type="match status" value="1"/>
</dbReference>
<dbReference type="InterPro" id="IPR055259">
    <property type="entry name" value="YkvP/CgeB_Glyco_trans-like"/>
</dbReference>
<dbReference type="Pfam" id="PF13524">
    <property type="entry name" value="Glyco_trans_1_2"/>
    <property type="match status" value="1"/>
</dbReference>
<dbReference type="SUPFAM" id="SSF53756">
    <property type="entry name" value="UDP-Glycosyltransferase/glycogen phosphorylase"/>
    <property type="match status" value="1"/>
</dbReference>
<feature type="chain" id="PRO_0000384818" description="Putative glycosyltransferase ORF315">
    <location>
        <begin position="1"/>
        <end position="315"/>
    </location>
</feature>
<accession>A4ZUA5</accession>
<organism>
    <name type="scientific">Acidianus bottle-shaped virus (isolate Italy/Pozzuoli)</name>
    <name type="common">ABV</name>
    <dbReference type="NCBI Taxonomy" id="654911"/>
    <lineage>
        <taxon>Viruses</taxon>
        <taxon>Viruses incertae sedis</taxon>
        <taxon>Ampullaviridae</taxon>
        <taxon>Bottigliavirus</taxon>
        <taxon>Bottigliavirus ABV</taxon>
    </lineage>
</organism>
<evidence type="ECO:0000305" key="1"/>
<protein>
    <recommendedName>
        <fullName>Putative glycosyltransferase ORF315</fullName>
        <ecNumber>2.4.-.-</ecNumber>
    </recommendedName>
</protein>
<comment type="similarity">
    <text evidence="1">Belongs to the glycosyltransferase group 1 family. Glycosyltransferase 4 subfamily.</text>
</comment>
<proteinExistence type="inferred from homology"/>